<proteinExistence type="inferred from homology"/>
<keyword id="KW-0133">Cell shape</keyword>
<keyword id="KW-0961">Cell wall biogenesis/degradation</keyword>
<keyword id="KW-0143">Chaperone</keyword>
<keyword id="KW-0963">Cytoplasm</keyword>
<keyword id="KW-1185">Reference proteome</keyword>
<keyword id="KW-0694">RNA-binding</keyword>
<comment type="function">
    <text evidence="1">A probable RNA chaperone. Forms a complex with KhpB which binds to cellular RNA and controls its expression. Plays a role in peptidoglycan (PG) homeostasis and cell length regulation.</text>
</comment>
<comment type="subunit">
    <text evidence="1">Forms a complex with KhpB.</text>
</comment>
<comment type="subcellular location">
    <subcellularLocation>
        <location evidence="1">Cytoplasm</location>
    </subcellularLocation>
</comment>
<comment type="similarity">
    <text evidence="1">Belongs to the KhpA RNA-binding protein family.</text>
</comment>
<sequence length="75" mass="8231">MKELVEIIAKSLVDKPEDVHVNEVLGEESIILELKVSPEDMGKVIGKQGRIAKAIRTVVKAAAIKENKKVVVEII</sequence>
<protein>
    <recommendedName>
        <fullName evidence="1">RNA-binding protein KhpA</fullName>
    </recommendedName>
    <alternativeName>
        <fullName evidence="1">KH-domain protein A</fullName>
    </alternativeName>
</protein>
<dbReference type="EMBL" id="BA000016">
    <property type="protein sequence ID" value="BAB81417.1"/>
    <property type="molecule type" value="Genomic_DNA"/>
</dbReference>
<dbReference type="RefSeq" id="WP_003458429.1">
    <property type="nucleotide sequence ID" value="NC_003366.1"/>
</dbReference>
<dbReference type="SMR" id="Q8XJP5"/>
<dbReference type="STRING" id="195102.gene:10490975"/>
<dbReference type="KEGG" id="cpe:CPE1711"/>
<dbReference type="HOGENOM" id="CLU_132074_1_0_9"/>
<dbReference type="Proteomes" id="UP000000818">
    <property type="component" value="Chromosome"/>
</dbReference>
<dbReference type="GO" id="GO:0005737">
    <property type="term" value="C:cytoplasm"/>
    <property type="evidence" value="ECO:0007669"/>
    <property type="project" value="UniProtKB-SubCell"/>
</dbReference>
<dbReference type="GO" id="GO:0003723">
    <property type="term" value="F:RNA binding"/>
    <property type="evidence" value="ECO:0007669"/>
    <property type="project" value="UniProtKB-UniRule"/>
</dbReference>
<dbReference type="GO" id="GO:0071555">
    <property type="term" value="P:cell wall organization"/>
    <property type="evidence" value="ECO:0007669"/>
    <property type="project" value="UniProtKB-KW"/>
</dbReference>
<dbReference type="GO" id="GO:0009252">
    <property type="term" value="P:peptidoglycan biosynthetic process"/>
    <property type="evidence" value="ECO:0007669"/>
    <property type="project" value="UniProtKB-UniRule"/>
</dbReference>
<dbReference type="GO" id="GO:0008360">
    <property type="term" value="P:regulation of cell shape"/>
    <property type="evidence" value="ECO:0007669"/>
    <property type="project" value="UniProtKB-KW"/>
</dbReference>
<dbReference type="CDD" id="cd22533">
    <property type="entry name" value="KH-II_YlqC-like"/>
    <property type="match status" value="1"/>
</dbReference>
<dbReference type="Gene3D" id="3.30.300.20">
    <property type="match status" value="1"/>
</dbReference>
<dbReference type="HAMAP" id="MF_00088">
    <property type="entry name" value="KhpA"/>
    <property type="match status" value="1"/>
</dbReference>
<dbReference type="InterPro" id="IPR015946">
    <property type="entry name" value="KH_dom-like_a/b"/>
</dbReference>
<dbReference type="InterPro" id="IPR009019">
    <property type="entry name" value="KH_sf_prok-type"/>
</dbReference>
<dbReference type="InterPro" id="IPR020627">
    <property type="entry name" value="KhpA"/>
</dbReference>
<dbReference type="NCBIfam" id="NF001748">
    <property type="entry name" value="PRK00468.1"/>
    <property type="match status" value="1"/>
</dbReference>
<dbReference type="PANTHER" id="PTHR34654:SF1">
    <property type="entry name" value="RNA-BINDING PROTEIN KHPA"/>
    <property type="match status" value="1"/>
</dbReference>
<dbReference type="PANTHER" id="PTHR34654">
    <property type="entry name" value="UPF0109 PROTEIN SCO5592"/>
    <property type="match status" value="1"/>
</dbReference>
<dbReference type="Pfam" id="PF13083">
    <property type="entry name" value="KH_KhpA-B"/>
    <property type="match status" value="1"/>
</dbReference>
<dbReference type="SUPFAM" id="SSF54814">
    <property type="entry name" value="Prokaryotic type KH domain (KH-domain type II)"/>
    <property type="match status" value="1"/>
</dbReference>
<dbReference type="PROSITE" id="PS50084">
    <property type="entry name" value="KH_TYPE_1"/>
    <property type="match status" value="1"/>
</dbReference>
<organism>
    <name type="scientific">Clostridium perfringens (strain 13 / Type A)</name>
    <dbReference type="NCBI Taxonomy" id="195102"/>
    <lineage>
        <taxon>Bacteria</taxon>
        <taxon>Bacillati</taxon>
        <taxon>Bacillota</taxon>
        <taxon>Clostridia</taxon>
        <taxon>Eubacteriales</taxon>
        <taxon>Clostridiaceae</taxon>
        <taxon>Clostridium</taxon>
    </lineage>
</organism>
<evidence type="ECO:0000255" key="1">
    <source>
        <dbReference type="HAMAP-Rule" id="MF_00088"/>
    </source>
</evidence>
<reference key="1">
    <citation type="journal article" date="2002" name="Proc. Natl. Acad. Sci. U.S.A.">
        <title>Complete genome sequence of Clostridium perfringens, an anaerobic flesh-eater.</title>
        <authorList>
            <person name="Shimizu T."/>
            <person name="Ohtani K."/>
            <person name="Hirakawa H."/>
            <person name="Ohshima K."/>
            <person name="Yamashita A."/>
            <person name="Shiba T."/>
            <person name="Ogasawara N."/>
            <person name="Hattori M."/>
            <person name="Kuhara S."/>
            <person name="Hayashi H."/>
        </authorList>
    </citation>
    <scope>NUCLEOTIDE SEQUENCE [LARGE SCALE GENOMIC DNA]</scope>
    <source>
        <strain>13 / Type A</strain>
    </source>
</reference>
<feature type="chain" id="PRO_0000163223" description="RNA-binding protein KhpA">
    <location>
        <begin position="1"/>
        <end position="75"/>
    </location>
</feature>
<feature type="domain" description="KH" evidence="1">
    <location>
        <begin position="29"/>
        <end position="75"/>
    </location>
</feature>
<gene>
    <name evidence="1" type="primary">khpA</name>
    <name type="ordered locus">CPE1711</name>
</gene>
<name>KHPA_CLOPE</name>
<accession>Q8XJP5</accession>